<sequence length="64" mass="7402">MAKLKTRRGAAKRFKATANGFKRKQAFKRHILTKKSAKRIRQLRGCVMVHVSDVASVRRMCPYI</sequence>
<protein>
    <recommendedName>
        <fullName evidence="1">Large ribosomal subunit protein bL35</fullName>
    </recommendedName>
    <alternativeName>
        <fullName evidence="2">50S ribosomal protein L35</fullName>
    </alternativeName>
</protein>
<comment type="similarity">
    <text evidence="1">Belongs to the bacterial ribosomal protein bL35 family.</text>
</comment>
<dbReference type="EMBL" id="CP001172">
    <property type="protein sequence ID" value="ACJ57410.1"/>
    <property type="molecule type" value="Genomic_DNA"/>
</dbReference>
<dbReference type="RefSeq" id="WP_001096359.1">
    <property type="nucleotide sequence ID" value="NZ_CP001172.1"/>
</dbReference>
<dbReference type="SMR" id="B7H000"/>
<dbReference type="GeneID" id="92892575"/>
<dbReference type="HOGENOM" id="CLU_169643_1_1_6"/>
<dbReference type="Proteomes" id="UP000006924">
    <property type="component" value="Chromosome"/>
</dbReference>
<dbReference type="GO" id="GO:0022625">
    <property type="term" value="C:cytosolic large ribosomal subunit"/>
    <property type="evidence" value="ECO:0007669"/>
    <property type="project" value="TreeGrafter"/>
</dbReference>
<dbReference type="GO" id="GO:0003735">
    <property type="term" value="F:structural constituent of ribosome"/>
    <property type="evidence" value="ECO:0007669"/>
    <property type="project" value="InterPro"/>
</dbReference>
<dbReference type="GO" id="GO:0006412">
    <property type="term" value="P:translation"/>
    <property type="evidence" value="ECO:0007669"/>
    <property type="project" value="UniProtKB-UniRule"/>
</dbReference>
<dbReference type="FunFam" id="4.10.410.60:FF:000001">
    <property type="entry name" value="50S ribosomal protein L35"/>
    <property type="match status" value="1"/>
</dbReference>
<dbReference type="Gene3D" id="4.10.410.60">
    <property type="match status" value="1"/>
</dbReference>
<dbReference type="HAMAP" id="MF_00514">
    <property type="entry name" value="Ribosomal_bL35"/>
    <property type="match status" value="1"/>
</dbReference>
<dbReference type="InterPro" id="IPR001706">
    <property type="entry name" value="Ribosomal_bL35"/>
</dbReference>
<dbReference type="InterPro" id="IPR021137">
    <property type="entry name" value="Ribosomal_bL35-like"/>
</dbReference>
<dbReference type="InterPro" id="IPR018265">
    <property type="entry name" value="Ribosomal_bL35_CS"/>
</dbReference>
<dbReference type="InterPro" id="IPR037229">
    <property type="entry name" value="Ribosomal_bL35_sf"/>
</dbReference>
<dbReference type="NCBIfam" id="TIGR00001">
    <property type="entry name" value="rpmI_bact"/>
    <property type="match status" value="1"/>
</dbReference>
<dbReference type="PANTHER" id="PTHR33343">
    <property type="entry name" value="54S RIBOSOMAL PROTEIN BL35M"/>
    <property type="match status" value="1"/>
</dbReference>
<dbReference type="PANTHER" id="PTHR33343:SF1">
    <property type="entry name" value="LARGE RIBOSOMAL SUBUNIT PROTEIN BL35M"/>
    <property type="match status" value="1"/>
</dbReference>
<dbReference type="Pfam" id="PF01632">
    <property type="entry name" value="Ribosomal_L35p"/>
    <property type="match status" value="1"/>
</dbReference>
<dbReference type="PRINTS" id="PR00064">
    <property type="entry name" value="RIBOSOMALL35"/>
</dbReference>
<dbReference type="SUPFAM" id="SSF143034">
    <property type="entry name" value="L35p-like"/>
    <property type="match status" value="1"/>
</dbReference>
<dbReference type="PROSITE" id="PS00936">
    <property type="entry name" value="RIBOSOMAL_L35"/>
    <property type="match status" value="1"/>
</dbReference>
<reference key="1">
    <citation type="journal article" date="2008" name="J. Bacteriol.">
        <title>Comparative genome sequence analysis of multidrug-resistant Acinetobacter baumannii.</title>
        <authorList>
            <person name="Adams M.D."/>
            <person name="Goglin K."/>
            <person name="Molyneaux N."/>
            <person name="Hujer K.M."/>
            <person name="Lavender H."/>
            <person name="Jamison J.J."/>
            <person name="MacDonald I.J."/>
            <person name="Martin K.M."/>
            <person name="Russo T."/>
            <person name="Campagnari A.A."/>
            <person name="Hujer A.M."/>
            <person name="Bonomo R.A."/>
            <person name="Gill S.R."/>
        </authorList>
    </citation>
    <scope>NUCLEOTIDE SEQUENCE [LARGE SCALE GENOMIC DNA]</scope>
    <source>
        <strain>AB307-0294</strain>
    </source>
</reference>
<organism>
    <name type="scientific">Acinetobacter baumannii (strain AB307-0294)</name>
    <dbReference type="NCBI Taxonomy" id="557600"/>
    <lineage>
        <taxon>Bacteria</taxon>
        <taxon>Pseudomonadati</taxon>
        <taxon>Pseudomonadota</taxon>
        <taxon>Gammaproteobacteria</taxon>
        <taxon>Moraxellales</taxon>
        <taxon>Moraxellaceae</taxon>
        <taxon>Acinetobacter</taxon>
        <taxon>Acinetobacter calcoaceticus/baumannii complex</taxon>
    </lineage>
</organism>
<accession>B7H000</accession>
<name>RL35_ACIB3</name>
<keyword id="KW-0687">Ribonucleoprotein</keyword>
<keyword id="KW-0689">Ribosomal protein</keyword>
<evidence type="ECO:0000255" key="1">
    <source>
        <dbReference type="HAMAP-Rule" id="MF_00514"/>
    </source>
</evidence>
<evidence type="ECO:0000305" key="2"/>
<proteinExistence type="inferred from homology"/>
<gene>
    <name evidence="1" type="primary">rpmI</name>
    <name type="ordered locus">ABBFA_002964</name>
</gene>
<feature type="chain" id="PRO_1000127290" description="Large ribosomal subunit protein bL35">
    <location>
        <begin position="1"/>
        <end position="64"/>
    </location>
</feature>